<name>HOG1_ALTBR</name>
<evidence type="ECO:0000250" key="1"/>
<evidence type="ECO:0000250" key="2">
    <source>
        <dbReference type="UniProtKB" id="P32485"/>
    </source>
</evidence>
<evidence type="ECO:0000250" key="3">
    <source>
        <dbReference type="UniProtKB" id="Q16539"/>
    </source>
</evidence>
<evidence type="ECO:0000250" key="4">
    <source>
        <dbReference type="UniProtKB" id="Q4WSF6"/>
    </source>
</evidence>
<evidence type="ECO:0000255" key="5">
    <source>
        <dbReference type="PROSITE-ProRule" id="PRU00159"/>
    </source>
</evidence>
<evidence type="ECO:0000255" key="6">
    <source>
        <dbReference type="PROSITE-ProRule" id="PRU10027"/>
    </source>
</evidence>
<sequence length="355" mass="40787">MAEFVRAQIFGTTFEITSRYTDLQPVGMGAFGLVCSAKDQLTSQAVAIKKIMKPFSTPVLSKRTYRELKLLKHLRHENIISLSDIFISPLEDIYFVTELLGTDLHRLLTSRPLEKQFIQYFLYQILRGLKYVHSAGVVHRDLKPSNILVNENCDLKICDFGLARIQDPQMTGYVSTRYYRAPEIMLTWQKYDVEVDIWSAGCIFAEMLEGKPLFPGKDHVNQFSIITELLGTPPDDVIQTICSENTLRFVQSLPKRERQPLSNKFKNAEPQAVDLLENMLVFDPKKRVRAEQALAHPYLAPYHDPTDEPIAEEKFDWSFNDADLPVDTWKIMMYSEILDYHNVDAAAQEQENNGS</sequence>
<reference key="1">
    <citation type="submission" date="2005-03" db="EMBL/GenBank/DDBJ databases">
        <title>Characterization of a HOG1 homolog from Alternaria brassicicola.</title>
        <authorList>
            <person name="Simoneau P."/>
            <person name="Sellam A."/>
            <person name="Bataille-Simoneau N."/>
        </authorList>
    </citation>
    <scope>NUCLEOTIDE SEQUENCE [GENOMIC DNA]</scope>
    <source>
        <strain>Abra43</strain>
    </source>
</reference>
<protein>
    <recommendedName>
        <fullName>Mitogen-activated protein kinase HOG1</fullName>
        <shortName>MAP kinase HOG1</shortName>
        <ecNumber evidence="2">2.7.11.24</ecNumber>
    </recommendedName>
</protein>
<gene>
    <name type="primary">HOG1</name>
</gene>
<proteinExistence type="inferred from homology"/>
<dbReference type="EC" id="2.7.11.24" evidence="2"/>
<dbReference type="EMBL" id="AY987486">
    <property type="protein sequence ID" value="AAX86000.1"/>
    <property type="molecule type" value="Genomic_DNA"/>
</dbReference>
<dbReference type="SMR" id="Q52PH6"/>
<dbReference type="GO" id="GO:0005737">
    <property type="term" value="C:cytoplasm"/>
    <property type="evidence" value="ECO:0007669"/>
    <property type="project" value="UniProtKB-SubCell"/>
</dbReference>
<dbReference type="GO" id="GO:0005634">
    <property type="term" value="C:nucleus"/>
    <property type="evidence" value="ECO:0007669"/>
    <property type="project" value="UniProtKB-SubCell"/>
</dbReference>
<dbReference type="GO" id="GO:0005524">
    <property type="term" value="F:ATP binding"/>
    <property type="evidence" value="ECO:0007669"/>
    <property type="project" value="UniProtKB-KW"/>
</dbReference>
<dbReference type="GO" id="GO:0004707">
    <property type="term" value="F:MAP kinase activity"/>
    <property type="evidence" value="ECO:0007669"/>
    <property type="project" value="UniProtKB-EC"/>
</dbReference>
<dbReference type="GO" id="GO:0106310">
    <property type="term" value="F:protein serine kinase activity"/>
    <property type="evidence" value="ECO:0007669"/>
    <property type="project" value="RHEA"/>
</dbReference>
<dbReference type="GO" id="GO:0051403">
    <property type="term" value="P:stress-activated MAPK cascade"/>
    <property type="evidence" value="ECO:0007669"/>
    <property type="project" value="InterPro"/>
</dbReference>
<dbReference type="CDD" id="cd07856">
    <property type="entry name" value="STKc_Sty1_Hog1"/>
    <property type="match status" value="1"/>
</dbReference>
<dbReference type="FunFam" id="1.10.510.10:FF:000049">
    <property type="entry name" value="Mitogen-activated protein kinase"/>
    <property type="match status" value="1"/>
</dbReference>
<dbReference type="FunFam" id="3.30.200.20:FF:000050">
    <property type="entry name" value="Mitogen-activated protein kinase"/>
    <property type="match status" value="1"/>
</dbReference>
<dbReference type="Gene3D" id="3.30.200.20">
    <property type="entry name" value="Phosphorylase Kinase, domain 1"/>
    <property type="match status" value="1"/>
</dbReference>
<dbReference type="Gene3D" id="1.10.510.10">
    <property type="entry name" value="Transferase(Phosphotransferase) domain 1"/>
    <property type="match status" value="1"/>
</dbReference>
<dbReference type="InterPro" id="IPR011009">
    <property type="entry name" value="Kinase-like_dom_sf"/>
</dbReference>
<dbReference type="InterPro" id="IPR050117">
    <property type="entry name" value="MAP_kinase"/>
</dbReference>
<dbReference type="InterPro" id="IPR003527">
    <property type="entry name" value="MAP_kinase_CS"/>
</dbReference>
<dbReference type="InterPro" id="IPR008352">
    <property type="entry name" value="MAPK_p38-like"/>
</dbReference>
<dbReference type="InterPro" id="IPR038783">
    <property type="entry name" value="MAPK_Sty1/Hog1"/>
</dbReference>
<dbReference type="InterPro" id="IPR000719">
    <property type="entry name" value="Prot_kinase_dom"/>
</dbReference>
<dbReference type="InterPro" id="IPR017441">
    <property type="entry name" value="Protein_kinase_ATP_BS"/>
</dbReference>
<dbReference type="InterPro" id="IPR008271">
    <property type="entry name" value="Ser/Thr_kinase_AS"/>
</dbReference>
<dbReference type="PANTHER" id="PTHR24055">
    <property type="entry name" value="MITOGEN-ACTIVATED PROTEIN KINASE"/>
    <property type="match status" value="1"/>
</dbReference>
<dbReference type="Pfam" id="PF00069">
    <property type="entry name" value="Pkinase"/>
    <property type="match status" value="1"/>
</dbReference>
<dbReference type="PRINTS" id="PR01773">
    <property type="entry name" value="P38MAPKINASE"/>
</dbReference>
<dbReference type="SMART" id="SM00220">
    <property type="entry name" value="S_TKc"/>
    <property type="match status" value="1"/>
</dbReference>
<dbReference type="SUPFAM" id="SSF56112">
    <property type="entry name" value="Protein kinase-like (PK-like)"/>
    <property type="match status" value="1"/>
</dbReference>
<dbReference type="PROSITE" id="PS01351">
    <property type="entry name" value="MAPK"/>
    <property type="match status" value="1"/>
</dbReference>
<dbReference type="PROSITE" id="PS00107">
    <property type="entry name" value="PROTEIN_KINASE_ATP"/>
    <property type="match status" value="1"/>
</dbReference>
<dbReference type="PROSITE" id="PS50011">
    <property type="entry name" value="PROTEIN_KINASE_DOM"/>
    <property type="match status" value="1"/>
</dbReference>
<dbReference type="PROSITE" id="PS00108">
    <property type="entry name" value="PROTEIN_KINASE_ST"/>
    <property type="match status" value="1"/>
</dbReference>
<organism>
    <name type="scientific">Alternaria brassicicola</name>
    <name type="common">Dark leaf spot agent</name>
    <dbReference type="NCBI Taxonomy" id="29001"/>
    <lineage>
        <taxon>Eukaryota</taxon>
        <taxon>Fungi</taxon>
        <taxon>Dikarya</taxon>
        <taxon>Ascomycota</taxon>
        <taxon>Pezizomycotina</taxon>
        <taxon>Dothideomycetes</taxon>
        <taxon>Pleosporomycetidae</taxon>
        <taxon>Pleosporales</taxon>
        <taxon>Pleosporineae</taxon>
        <taxon>Pleosporaceae</taxon>
        <taxon>Alternaria</taxon>
        <taxon>Alternaria sect. Brassicicola</taxon>
    </lineage>
</organism>
<feature type="chain" id="PRO_0000289671" description="Mitogen-activated protein kinase HOG1">
    <location>
        <begin position="1"/>
        <end position="355"/>
    </location>
</feature>
<feature type="domain" description="Protein kinase" evidence="5">
    <location>
        <begin position="20"/>
        <end position="299"/>
    </location>
</feature>
<feature type="short sequence motif" description="TXY">
    <location>
        <begin position="171"/>
        <end position="173"/>
    </location>
</feature>
<feature type="active site" description="Proton acceptor" evidence="5 6">
    <location>
        <position position="141"/>
    </location>
</feature>
<feature type="binding site" evidence="5">
    <location>
        <begin position="26"/>
        <end position="34"/>
    </location>
    <ligand>
        <name>ATP</name>
        <dbReference type="ChEBI" id="CHEBI:30616"/>
    </ligand>
</feature>
<feature type="binding site" evidence="5">
    <location>
        <position position="49"/>
    </location>
    <ligand>
        <name>ATP</name>
        <dbReference type="ChEBI" id="CHEBI:30616"/>
    </ligand>
</feature>
<feature type="modified residue" description="Phosphothreonine" evidence="1">
    <location>
        <position position="171"/>
    </location>
</feature>
<feature type="modified residue" description="Phosphotyrosine" evidence="1">
    <location>
        <position position="173"/>
    </location>
</feature>
<keyword id="KW-0010">Activator</keyword>
<keyword id="KW-0067">ATP-binding</keyword>
<keyword id="KW-0963">Cytoplasm</keyword>
<keyword id="KW-0418">Kinase</keyword>
<keyword id="KW-0547">Nucleotide-binding</keyword>
<keyword id="KW-0539">Nucleus</keyword>
<keyword id="KW-0597">Phosphoprotein</keyword>
<keyword id="KW-0723">Serine/threonine-protein kinase</keyword>
<keyword id="KW-0804">Transcription</keyword>
<keyword id="KW-0805">Transcription regulation</keyword>
<keyword id="KW-0808">Transferase</keyword>
<comment type="function">
    <text evidence="4">Proline-directed serine/threonine-protein kinase involved in a signal transduction pathway that is activated by changes in the osmolarity of the extracellular environment. Controls osmotic regulation of transcription of target genes.</text>
</comment>
<comment type="catalytic activity">
    <reaction evidence="2">
        <text>L-seryl-[protein] + ATP = O-phospho-L-seryl-[protein] + ADP + H(+)</text>
        <dbReference type="Rhea" id="RHEA:17989"/>
        <dbReference type="Rhea" id="RHEA-COMP:9863"/>
        <dbReference type="Rhea" id="RHEA-COMP:11604"/>
        <dbReference type="ChEBI" id="CHEBI:15378"/>
        <dbReference type="ChEBI" id="CHEBI:29999"/>
        <dbReference type="ChEBI" id="CHEBI:30616"/>
        <dbReference type="ChEBI" id="CHEBI:83421"/>
        <dbReference type="ChEBI" id="CHEBI:456216"/>
        <dbReference type="EC" id="2.7.11.24"/>
    </reaction>
    <physiologicalReaction direction="left-to-right" evidence="2">
        <dbReference type="Rhea" id="RHEA:17990"/>
    </physiologicalReaction>
</comment>
<comment type="catalytic activity">
    <reaction evidence="2">
        <text>L-threonyl-[protein] + ATP = O-phospho-L-threonyl-[protein] + ADP + H(+)</text>
        <dbReference type="Rhea" id="RHEA:46608"/>
        <dbReference type="Rhea" id="RHEA-COMP:11060"/>
        <dbReference type="Rhea" id="RHEA-COMP:11605"/>
        <dbReference type="ChEBI" id="CHEBI:15378"/>
        <dbReference type="ChEBI" id="CHEBI:30013"/>
        <dbReference type="ChEBI" id="CHEBI:30616"/>
        <dbReference type="ChEBI" id="CHEBI:61977"/>
        <dbReference type="ChEBI" id="CHEBI:456216"/>
        <dbReference type="EC" id="2.7.11.24"/>
    </reaction>
    <physiologicalReaction direction="left-to-right" evidence="2">
        <dbReference type="Rhea" id="RHEA:46609"/>
    </physiologicalReaction>
</comment>
<comment type="cofactor">
    <cofactor evidence="3">
        <name>Mg(2+)</name>
        <dbReference type="ChEBI" id="CHEBI:18420"/>
    </cofactor>
</comment>
<comment type="activity regulation">
    <text evidence="1">Activated by tyrosine and threonine phosphorylation.</text>
</comment>
<comment type="subcellular location">
    <subcellularLocation>
        <location evidence="1">Cytoplasm</location>
    </subcellularLocation>
    <subcellularLocation>
        <location evidence="1">Nucleus</location>
    </subcellularLocation>
</comment>
<comment type="domain">
    <text>The TXY motif contains the threonine and tyrosine residues whose phosphorylation activates the MAP kinases.</text>
</comment>
<comment type="PTM">
    <text evidence="1">Dually phosphorylated on Thr-171 and Tyr-173, which activates the enzyme.</text>
</comment>
<comment type="similarity">
    <text evidence="5">Belongs to the protein kinase superfamily. Ser/Thr protein kinase family. MAP kinase subfamily. HOG1 sub-subfamily.</text>
</comment>
<accession>Q52PH6</accession>